<evidence type="ECO:0000250" key="1">
    <source>
        <dbReference type="UniProtKB" id="Q47098"/>
    </source>
</evidence>
<evidence type="ECO:0000269" key="2">
    <source ref="2"/>
</evidence>
<evidence type="ECO:0000303" key="3">
    <source ref="2"/>
</evidence>
<evidence type="ECO:0000305" key="4"/>
<evidence type="ECO:0000312" key="5">
    <source>
        <dbReference type="EMBL" id="ACD14745.1"/>
    </source>
</evidence>
<name>HPAA1_PARPJ</name>
<organism>
    <name type="scientific">Paraburkholderia phytofirmans (strain DSM 17436 / LMG 22146 / PsJN)</name>
    <name type="common">Burkholderia phytofirmans</name>
    <dbReference type="NCBI Taxonomy" id="398527"/>
    <lineage>
        <taxon>Bacteria</taxon>
        <taxon>Pseudomonadati</taxon>
        <taxon>Pseudomonadota</taxon>
        <taxon>Betaproteobacteria</taxon>
        <taxon>Burkholderiales</taxon>
        <taxon>Burkholderiaceae</taxon>
        <taxon>Paraburkholderia</taxon>
    </lineage>
</organism>
<accession>B2T1L6</accession>
<protein>
    <recommendedName>
        <fullName evidence="3">Hydroxypyruvate/pyruvate aldolase Bphyt_0320</fullName>
        <shortName evidence="3">HPA/PA aldolase</shortName>
        <ecNumber evidence="2">4.1.2.-</ecNumber>
    </recommendedName>
</protein>
<reference key="1">
    <citation type="journal article" date="2011" name="J. Bacteriol.">
        <title>Complete genome sequence of the plant growth-promoting endophyte Burkholderia phytofirmans strain PsJN.</title>
        <authorList>
            <person name="Weilharter A."/>
            <person name="Mitter B."/>
            <person name="Shin M.V."/>
            <person name="Chain P.S."/>
            <person name="Nowak J."/>
            <person name="Sessitsch A."/>
        </authorList>
    </citation>
    <scope>NUCLEOTIDE SEQUENCE [LARGE SCALE GENOMIC DNA]</scope>
    <source>
        <strain>DSM 17436 / LMG 22146 / PsJN</strain>
    </source>
</reference>
<reference key="2">
    <citation type="journal article" date="2017" name="Green Chem.">
        <title>Expanding the reaction space of aldolases using hydroxypyruvate as a nucleophilic substrate.</title>
        <authorList>
            <person name="de Berardinis V."/>
            <person name="Guerard-Helaine C."/>
            <person name="Darii E."/>
            <person name="Bastard K."/>
            <person name="Helaine V."/>
            <person name="Mariage A."/>
            <person name="Petit J.-L."/>
            <person name="Poupard N."/>
            <person name="Sanchez-Moreno I."/>
            <person name="Stam M."/>
            <person name="Gefflaut T."/>
            <person name="Salanoubat M."/>
            <person name="Lemaire M."/>
        </authorList>
    </citation>
    <scope>FUNCTION</scope>
    <scope>CATALYTIC ACTIVITY</scope>
    <scope>COFACTOR</scope>
</reference>
<proteinExistence type="evidence at protein level"/>
<gene>
    <name evidence="5" type="ordered locus">Bphyt_0320</name>
</gene>
<sequence>MSTFTNPLKSRLKETDPLFGLWLSLGSDAAAEALAHAGYDWLLIDMEHSPNDSGDVTSQLRAIAAAHLPSEPVVRVPSSEAWLVKRVLDAGARTLMFPNIESADEAARAVRLTQYPSAGALDGERGVAGAVRAAGYGMRRDYVQTANAQIATIVQIESARGLQEVEKIAATPGVDCLFVGPADLAASLGHLGDSKHADVQAAMARIVSAADKAGIAAGIFAMDVASAKQHRDAGFRFIALAADVMWMLRATRQALQEVRS</sequence>
<keyword id="KW-0170">Cobalt</keyword>
<keyword id="KW-0456">Lyase</keyword>
<keyword id="KW-0460">Magnesium</keyword>
<keyword id="KW-0464">Manganese</keyword>
<keyword id="KW-0479">Metal-binding</keyword>
<keyword id="KW-0670">Pyruvate</keyword>
<feature type="chain" id="PRO_0000460952" description="Hydroxypyruvate/pyruvate aldolase Bphyt_0320">
    <location>
        <begin position="1"/>
        <end position="260"/>
    </location>
</feature>
<feature type="active site" description="Proton acceptor" evidence="1">
    <location>
        <position position="48"/>
    </location>
</feature>
<feature type="binding site" evidence="1">
    <location>
        <position position="157"/>
    </location>
    <ligand>
        <name>a divalent metal cation</name>
        <dbReference type="ChEBI" id="CHEBI:60240"/>
    </ligand>
</feature>
<feature type="binding site" evidence="1">
    <location>
        <position position="183"/>
    </location>
    <ligand>
        <name>a divalent metal cation</name>
        <dbReference type="ChEBI" id="CHEBI:60240"/>
    </ligand>
</feature>
<feature type="site" description="Transition state stabilizer" evidence="1">
    <location>
        <position position="75"/>
    </location>
</feature>
<feature type="site" description="Increases basicity of active site His" evidence="1">
    <location>
        <position position="89"/>
    </location>
</feature>
<dbReference type="EC" id="4.1.2.-" evidence="2"/>
<dbReference type="EMBL" id="CP001052">
    <property type="protein sequence ID" value="ACD14745.1"/>
    <property type="molecule type" value="Genomic_DNA"/>
</dbReference>
<dbReference type="RefSeq" id="WP_012431390.1">
    <property type="nucleotide sequence ID" value="NC_010681.1"/>
</dbReference>
<dbReference type="SMR" id="B2T1L6"/>
<dbReference type="STRING" id="398527.Bphyt_0320"/>
<dbReference type="KEGG" id="bpy:Bphyt_0320"/>
<dbReference type="eggNOG" id="COG3836">
    <property type="taxonomic scope" value="Bacteria"/>
</dbReference>
<dbReference type="HOGENOM" id="CLU_059964_1_0_4"/>
<dbReference type="OrthoDB" id="86160at2"/>
<dbReference type="Proteomes" id="UP000001739">
    <property type="component" value="Chromosome 1"/>
</dbReference>
<dbReference type="GO" id="GO:0005737">
    <property type="term" value="C:cytoplasm"/>
    <property type="evidence" value="ECO:0007669"/>
    <property type="project" value="TreeGrafter"/>
</dbReference>
<dbReference type="GO" id="GO:0061677">
    <property type="term" value="F:2-dehydro-3-deoxy-D-gluconate aldolase activity"/>
    <property type="evidence" value="ECO:0007669"/>
    <property type="project" value="RHEA"/>
</dbReference>
<dbReference type="GO" id="GO:0008672">
    <property type="term" value="F:2-dehydro-3-deoxyglucarate aldolase activity"/>
    <property type="evidence" value="ECO:0007669"/>
    <property type="project" value="UniProtKB-EC"/>
</dbReference>
<dbReference type="GO" id="GO:0046872">
    <property type="term" value="F:metal ion binding"/>
    <property type="evidence" value="ECO:0007669"/>
    <property type="project" value="UniProtKB-KW"/>
</dbReference>
<dbReference type="Gene3D" id="3.20.20.60">
    <property type="entry name" value="Phosphoenolpyruvate-binding domains"/>
    <property type="match status" value="1"/>
</dbReference>
<dbReference type="InterPro" id="IPR005000">
    <property type="entry name" value="Aldolase/citrate-lyase_domain"/>
</dbReference>
<dbReference type="InterPro" id="IPR050251">
    <property type="entry name" value="HpcH-HpaI_aldolase"/>
</dbReference>
<dbReference type="InterPro" id="IPR015813">
    <property type="entry name" value="Pyrv/PenolPyrv_kinase-like_dom"/>
</dbReference>
<dbReference type="InterPro" id="IPR040442">
    <property type="entry name" value="Pyrv_kinase-like_dom_sf"/>
</dbReference>
<dbReference type="PANTHER" id="PTHR30502">
    <property type="entry name" value="2-KETO-3-DEOXY-L-RHAMNONATE ALDOLASE"/>
    <property type="match status" value="1"/>
</dbReference>
<dbReference type="PANTHER" id="PTHR30502:SF0">
    <property type="entry name" value="PHOSPHOENOLPYRUVATE CARBOXYLASE FAMILY PROTEIN"/>
    <property type="match status" value="1"/>
</dbReference>
<dbReference type="Pfam" id="PF03328">
    <property type="entry name" value="HpcH_HpaI"/>
    <property type="match status" value="1"/>
</dbReference>
<dbReference type="SUPFAM" id="SSF51621">
    <property type="entry name" value="Phosphoenolpyruvate/pyruvate domain"/>
    <property type="match status" value="1"/>
</dbReference>
<comment type="function">
    <text evidence="2">Aldolase which can catalyze in vitro the aldolisation reaction between hydroxypyruvate (HPA) or pyruvate (PA) and D-glyceraldehyde (D-GA) (Ref.2). The condensation of hydroxypyruvate and D-glyceraldehyde produces 2-dehydro-D-gluconate (Ref.2). The condensation of pyruvate and D-glyceraldehyde produces 2-dehydro-3-deoxy-L-galactonate as the major product and 2-dehydro-3-deoxy-D-gluconate (Ref.2). Also catalyzes the retro-aldol type decarboxylation of oxaloacetate, a general property of known pyruvate aldolases (Ref.2).</text>
</comment>
<comment type="catalytic activity">
    <reaction evidence="2">
        <text>D-glyceraldehyde + 3-hydroxypyruvate = 2-dehydro-D-gluconate</text>
        <dbReference type="Rhea" id="RHEA:80043"/>
        <dbReference type="ChEBI" id="CHEBI:16808"/>
        <dbReference type="ChEBI" id="CHEBI:17180"/>
        <dbReference type="ChEBI" id="CHEBI:17378"/>
    </reaction>
</comment>
<comment type="catalytic activity">
    <reaction evidence="2">
        <text>D-glyceraldehyde + pyruvate = 2-dehydro-3-deoxy-L-galactonate</text>
        <dbReference type="Rhea" id="RHEA:80055"/>
        <dbReference type="ChEBI" id="CHEBI:15361"/>
        <dbReference type="ChEBI" id="CHEBI:17378"/>
        <dbReference type="ChEBI" id="CHEBI:75545"/>
    </reaction>
</comment>
<comment type="catalytic activity">
    <reaction evidence="2">
        <text>2-dehydro-3-deoxy-D-gluconate = D-glyceraldehyde + pyruvate</text>
        <dbReference type="Rhea" id="RHEA:35583"/>
        <dbReference type="ChEBI" id="CHEBI:15361"/>
        <dbReference type="ChEBI" id="CHEBI:17378"/>
        <dbReference type="ChEBI" id="CHEBI:57990"/>
    </reaction>
</comment>
<comment type="cofactor">
    <cofactor evidence="2">
        <name>Mn(2+)</name>
        <dbReference type="ChEBI" id="CHEBI:29035"/>
    </cofactor>
    <cofactor evidence="2">
        <name>Mg(2+)</name>
        <dbReference type="ChEBI" id="CHEBI:18420"/>
    </cofactor>
    <cofactor evidence="2">
        <name>Co(2+)</name>
        <dbReference type="ChEBI" id="CHEBI:48828"/>
    </cofactor>
    <text evidence="2">Shows a slight preference for Mn(2+).</text>
</comment>
<comment type="similarity">
    <text evidence="4">Belongs to the HpcH/HpaI aldolase family.</text>
</comment>